<keyword id="KW-0963">Cytoplasm</keyword>
<keyword id="KW-0350">Heme biosynthesis</keyword>
<keyword id="KW-0408">Iron</keyword>
<keyword id="KW-0456">Lyase</keyword>
<keyword id="KW-0479">Metal-binding</keyword>
<keyword id="KW-0627">Porphyrin biosynthesis</keyword>
<reference key="1">
    <citation type="journal article" date="2007" name="Proc. Natl. Acad. Sci. U.S.A.">
        <title>Genome plasticity of BCG and impact on vaccine efficacy.</title>
        <authorList>
            <person name="Brosch R."/>
            <person name="Gordon S.V."/>
            <person name="Garnier T."/>
            <person name="Eiglmeier K."/>
            <person name="Frigui W."/>
            <person name="Valenti P."/>
            <person name="Dos Santos S."/>
            <person name="Duthoy S."/>
            <person name="Lacroix C."/>
            <person name="Garcia-Pelayo C."/>
            <person name="Inwald J.K."/>
            <person name="Golby P."/>
            <person name="Garcia J.N."/>
            <person name="Hewinson R.G."/>
            <person name="Behr M.A."/>
            <person name="Quail M.A."/>
            <person name="Churcher C."/>
            <person name="Barrell B.G."/>
            <person name="Parkhill J."/>
            <person name="Cole S.T."/>
        </authorList>
    </citation>
    <scope>NUCLEOTIDE SEQUENCE [LARGE SCALE GENOMIC DNA]</scope>
    <source>
        <strain>BCG / Pasteur 1173P2</strain>
    </source>
</reference>
<name>CPFC_MYCBP</name>
<protein>
    <recommendedName>
        <fullName evidence="1">Coproporphyrin III ferrochelatase</fullName>
        <ecNumber evidence="1">4.99.1.9</ecNumber>
    </recommendedName>
</protein>
<accession>A1KIS5</accession>
<comment type="function">
    <text evidence="1">Involved in coproporphyrin-dependent heme b biosynthesis. Catalyzes the insertion of ferrous iron into coproporphyrin III to form Fe-coproporphyrin III.</text>
</comment>
<comment type="catalytic activity">
    <reaction evidence="1">
        <text>Fe-coproporphyrin III + 2 H(+) = coproporphyrin III + Fe(2+)</text>
        <dbReference type="Rhea" id="RHEA:49572"/>
        <dbReference type="ChEBI" id="CHEBI:15378"/>
        <dbReference type="ChEBI" id="CHEBI:29033"/>
        <dbReference type="ChEBI" id="CHEBI:68438"/>
        <dbReference type="ChEBI" id="CHEBI:131725"/>
        <dbReference type="EC" id="4.99.1.9"/>
    </reaction>
    <physiologicalReaction direction="right-to-left" evidence="1">
        <dbReference type="Rhea" id="RHEA:49574"/>
    </physiologicalReaction>
</comment>
<comment type="pathway">
    <text evidence="1">Porphyrin-containing compound metabolism; protoheme biosynthesis.</text>
</comment>
<comment type="subcellular location">
    <subcellularLocation>
        <location evidence="1">Cytoplasm</location>
    </subcellularLocation>
</comment>
<comment type="similarity">
    <text evidence="1">Belongs to the ferrochelatase family.</text>
</comment>
<sequence length="344" mass="37144">MQFDAVLLLSFGGPEGPEQVRPFLENVTRGRGVPAERLDAVAEHYLHFGGVSPINGINRTLIAELEAQQELPVYFGNRNWEPYVEDAVTAMRDNGVRRAAVFATSAWSGYSSCTQYVEDIARARRAAGRDAPELVKLRPYFDHPLFVEMFADAITAAAATVRGDARLVFTAHSIPTAADRRCGPNLYSRQVAYATRLVAAAAGYCDFDLAWQSRSGPPQVPWLEPDVTDQLTGLAGAGINAVIVCPIGFVADHIEVVWDLDHELRLQAEAAGIAYARASTPNADPRFARLARGLIDELRYGRIPARVSGPDPVPGCLSSINGQPCRPPHCVASVSPARPSAGSP</sequence>
<gene>
    <name evidence="1" type="primary">cpfC</name>
    <name type="ordered locus">BCG_1547</name>
</gene>
<evidence type="ECO:0000255" key="1">
    <source>
        <dbReference type="HAMAP-Rule" id="MF_00323"/>
    </source>
</evidence>
<feature type="chain" id="PRO_1000019320" description="Coproporphyrin III ferrochelatase">
    <location>
        <begin position="1"/>
        <end position="344"/>
    </location>
</feature>
<feature type="binding site" evidence="1">
    <location>
        <position position="52"/>
    </location>
    <ligand>
        <name>Fe-coproporphyrin III</name>
        <dbReference type="ChEBI" id="CHEBI:68438"/>
    </ligand>
</feature>
<feature type="binding site" evidence="1">
    <location>
        <position position="116"/>
    </location>
    <ligand>
        <name>Fe-coproporphyrin III</name>
        <dbReference type="ChEBI" id="CHEBI:68438"/>
    </ligand>
</feature>
<feature type="binding site" evidence="1">
    <location>
        <position position="172"/>
    </location>
    <ligand>
        <name>Fe(2+)</name>
        <dbReference type="ChEBI" id="CHEBI:29033"/>
    </ligand>
</feature>
<feature type="binding site" evidence="1">
    <location>
        <position position="255"/>
    </location>
    <ligand>
        <name>Fe(2+)</name>
        <dbReference type="ChEBI" id="CHEBI:29033"/>
    </ligand>
</feature>
<organism>
    <name type="scientific">Mycobacterium bovis (strain BCG / Pasteur 1173P2)</name>
    <dbReference type="NCBI Taxonomy" id="410289"/>
    <lineage>
        <taxon>Bacteria</taxon>
        <taxon>Bacillati</taxon>
        <taxon>Actinomycetota</taxon>
        <taxon>Actinomycetes</taxon>
        <taxon>Mycobacteriales</taxon>
        <taxon>Mycobacteriaceae</taxon>
        <taxon>Mycobacterium</taxon>
        <taxon>Mycobacterium tuberculosis complex</taxon>
    </lineage>
</organism>
<dbReference type="EC" id="4.99.1.9" evidence="1"/>
<dbReference type="EMBL" id="AM408590">
    <property type="protein sequence ID" value="CAL71534.1"/>
    <property type="molecule type" value="Genomic_DNA"/>
</dbReference>
<dbReference type="RefSeq" id="WP_003407559.1">
    <property type="nucleotide sequence ID" value="NC_008769.1"/>
</dbReference>
<dbReference type="SMR" id="A1KIS5"/>
<dbReference type="KEGG" id="mbb:BCG_1547"/>
<dbReference type="HOGENOM" id="CLU_018884_2_0_11"/>
<dbReference type="UniPathway" id="UPA00252"/>
<dbReference type="Proteomes" id="UP000001472">
    <property type="component" value="Chromosome"/>
</dbReference>
<dbReference type="GO" id="GO:0005737">
    <property type="term" value="C:cytoplasm"/>
    <property type="evidence" value="ECO:0007669"/>
    <property type="project" value="UniProtKB-SubCell"/>
</dbReference>
<dbReference type="GO" id="GO:0004325">
    <property type="term" value="F:ferrochelatase activity"/>
    <property type="evidence" value="ECO:0007669"/>
    <property type="project" value="UniProtKB-UniRule"/>
</dbReference>
<dbReference type="GO" id="GO:0046872">
    <property type="term" value="F:metal ion binding"/>
    <property type="evidence" value="ECO:0007669"/>
    <property type="project" value="UniProtKB-KW"/>
</dbReference>
<dbReference type="GO" id="GO:0006783">
    <property type="term" value="P:heme biosynthetic process"/>
    <property type="evidence" value="ECO:0007669"/>
    <property type="project" value="UniProtKB-UniRule"/>
</dbReference>
<dbReference type="CDD" id="cd00419">
    <property type="entry name" value="Ferrochelatase_C"/>
    <property type="match status" value="1"/>
</dbReference>
<dbReference type="CDD" id="cd03411">
    <property type="entry name" value="Ferrochelatase_N"/>
    <property type="match status" value="1"/>
</dbReference>
<dbReference type="FunFam" id="3.40.50.1400:FF:000007">
    <property type="entry name" value="Ferrochelatase"/>
    <property type="match status" value="1"/>
</dbReference>
<dbReference type="Gene3D" id="3.40.50.1400">
    <property type="match status" value="2"/>
</dbReference>
<dbReference type="HAMAP" id="MF_00323">
    <property type="entry name" value="Ferrochelatase"/>
    <property type="match status" value="1"/>
</dbReference>
<dbReference type="InterPro" id="IPR001015">
    <property type="entry name" value="Ferrochelatase"/>
</dbReference>
<dbReference type="InterPro" id="IPR019772">
    <property type="entry name" value="Ferrochelatase_AS"/>
</dbReference>
<dbReference type="InterPro" id="IPR033644">
    <property type="entry name" value="Ferrochelatase_C"/>
</dbReference>
<dbReference type="InterPro" id="IPR033659">
    <property type="entry name" value="Ferrochelatase_N"/>
</dbReference>
<dbReference type="NCBIfam" id="TIGR00109">
    <property type="entry name" value="hemH"/>
    <property type="match status" value="1"/>
</dbReference>
<dbReference type="NCBIfam" id="NF000689">
    <property type="entry name" value="PRK00035.2-1"/>
    <property type="match status" value="1"/>
</dbReference>
<dbReference type="PANTHER" id="PTHR11108">
    <property type="entry name" value="FERROCHELATASE"/>
    <property type="match status" value="1"/>
</dbReference>
<dbReference type="PANTHER" id="PTHR11108:SF1">
    <property type="entry name" value="FERROCHELATASE, MITOCHONDRIAL"/>
    <property type="match status" value="1"/>
</dbReference>
<dbReference type="Pfam" id="PF00762">
    <property type="entry name" value="Ferrochelatase"/>
    <property type="match status" value="1"/>
</dbReference>
<dbReference type="SUPFAM" id="SSF53800">
    <property type="entry name" value="Chelatase"/>
    <property type="match status" value="1"/>
</dbReference>
<dbReference type="PROSITE" id="PS00534">
    <property type="entry name" value="FERROCHELATASE"/>
    <property type="match status" value="1"/>
</dbReference>
<proteinExistence type="inferred from homology"/>